<organismHost>
    <name type="scientific">Gallus gallus</name>
    <name type="common">Chicken</name>
    <dbReference type="NCBI Taxonomy" id="9031"/>
</organismHost>
<accession>P54093</accession>
<sequence>MHGNGGQPAAGGSESALSREGQPGPSGAAQGQVISNERSPRRYSTRTINGVQATNKFTAVGNPSLQRDPDWYRWNYNHSIAVWLRECSRSHAKICNCGQFRKHWFQECAGLEDRSTQASLEEAILRPLRVQGKRAKRKLDYHYSQPTPNRKKVYKTVRWKDELADREADFTPSEEDGGTTSSDFDEDINFDIGGDSGIVDELLGRPFTTPAPVRIV</sequence>
<comment type="function">
    <text evidence="1">May act as a scaffold protein in virion assembly. May also play a role in intracellular signaling during viral replication (By similarity).</text>
</comment>
<comment type="catalytic activity">
    <reaction>
        <text>O-phospho-L-tyrosyl-[protein] + H2O = L-tyrosyl-[protein] + phosphate</text>
        <dbReference type="Rhea" id="RHEA:10684"/>
        <dbReference type="Rhea" id="RHEA-COMP:10136"/>
        <dbReference type="Rhea" id="RHEA-COMP:20101"/>
        <dbReference type="ChEBI" id="CHEBI:15377"/>
        <dbReference type="ChEBI" id="CHEBI:43474"/>
        <dbReference type="ChEBI" id="CHEBI:46858"/>
        <dbReference type="ChEBI" id="CHEBI:61978"/>
        <dbReference type="EC" id="3.1.3.48"/>
    </reaction>
</comment>
<comment type="catalytic activity">
    <reaction>
        <text>O-phospho-L-seryl-[protein] + H2O = L-seryl-[protein] + phosphate</text>
        <dbReference type="Rhea" id="RHEA:20629"/>
        <dbReference type="Rhea" id="RHEA-COMP:9863"/>
        <dbReference type="Rhea" id="RHEA-COMP:11604"/>
        <dbReference type="ChEBI" id="CHEBI:15377"/>
        <dbReference type="ChEBI" id="CHEBI:29999"/>
        <dbReference type="ChEBI" id="CHEBI:43474"/>
        <dbReference type="ChEBI" id="CHEBI:83421"/>
        <dbReference type="EC" id="3.1.3.16"/>
    </reaction>
</comment>
<comment type="catalytic activity">
    <reaction>
        <text>O-phospho-L-threonyl-[protein] + H2O = L-threonyl-[protein] + phosphate</text>
        <dbReference type="Rhea" id="RHEA:47004"/>
        <dbReference type="Rhea" id="RHEA-COMP:11060"/>
        <dbReference type="Rhea" id="RHEA-COMP:11605"/>
        <dbReference type="ChEBI" id="CHEBI:15377"/>
        <dbReference type="ChEBI" id="CHEBI:30013"/>
        <dbReference type="ChEBI" id="CHEBI:43474"/>
        <dbReference type="ChEBI" id="CHEBI:61977"/>
        <dbReference type="EC" id="3.1.3.16"/>
    </reaction>
</comment>
<comment type="induction">
    <text>VP1 and VP2 are detected 12 hours post infection, while VP3 only after 24 hours.</text>
</comment>
<comment type="similarity">
    <text evidence="3">Belongs to the gyrovirus protein VP2 family.</text>
</comment>
<keyword id="KW-0244">Early protein</keyword>
<keyword id="KW-0378">Hydrolase</keyword>
<keyword id="KW-0904">Protein phosphatase</keyword>
<feature type="chain" id="PRO_0000223003" description="Dual specificity protein phosphatase VP2">
    <location>
        <begin position="1"/>
        <end position="216"/>
    </location>
</feature>
<feature type="region of interest" description="Disordered" evidence="2">
    <location>
        <begin position="1"/>
        <end position="50"/>
    </location>
</feature>
<feature type="region of interest" description="Disordered" evidence="2">
    <location>
        <begin position="166"/>
        <end position="187"/>
    </location>
</feature>
<feature type="compositionally biased region" description="Low complexity" evidence="2">
    <location>
        <begin position="21"/>
        <end position="32"/>
    </location>
</feature>
<feature type="compositionally biased region" description="Acidic residues" evidence="2">
    <location>
        <begin position="172"/>
        <end position="187"/>
    </location>
</feature>
<feature type="active site" description="Phosphocysteine intermediate" evidence="1">
    <location>
        <position position="95"/>
    </location>
</feature>
<proteinExistence type="evidence at transcript level"/>
<protein>
    <recommendedName>
        <fullName>Dual specificity protein phosphatase VP2</fullName>
        <ecNumber>3.1.3.16</ecNumber>
        <ecNumber>3.1.3.48</ecNumber>
    </recommendedName>
</protein>
<gene>
    <name type="primary">VP2</name>
</gene>
<name>VP2_CAV82</name>
<dbReference type="EC" id="3.1.3.16"/>
<dbReference type="EC" id="3.1.3.48"/>
<dbReference type="EMBL" id="D31965">
    <property type="protein sequence ID" value="BAA06732.1"/>
    <property type="molecule type" value="Genomic_DNA"/>
</dbReference>
<dbReference type="Proteomes" id="UP000008443">
    <property type="component" value="Genome"/>
</dbReference>
<dbReference type="GO" id="GO:0004722">
    <property type="term" value="F:protein serine/threonine phosphatase activity"/>
    <property type="evidence" value="ECO:0007669"/>
    <property type="project" value="UniProtKB-EC"/>
</dbReference>
<dbReference type="GO" id="GO:0004725">
    <property type="term" value="F:protein tyrosine phosphatase activity"/>
    <property type="evidence" value="ECO:0007669"/>
    <property type="project" value="UniProtKB-EC"/>
</dbReference>
<dbReference type="InterPro" id="IPR004118">
    <property type="entry name" value="HEV_TT_vir_Orf2/Gyrovir_Vp2_N"/>
</dbReference>
<dbReference type="Pfam" id="PF02957">
    <property type="entry name" value="TT_ORF2-like"/>
    <property type="match status" value="1"/>
</dbReference>
<organism>
    <name type="scientific">Chicken anemia virus (isolate Japan 82-2)</name>
    <name type="common">CAV</name>
    <dbReference type="NCBI Taxonomy" id="73476"/>
    <lineage>
        <taxon>Viruses</taxon>
        <taxon>Viruses incertae sedis</taxon>
        <taxon>Anelloviridae</taxon>
        <taxon>Gyrovirus</taxon>
        <taxon>Gyrovirus chickenanemia</taxon>
    </lineage>
</organism>
<reference key="1">
    <citation type="journal article" date="1995" name="Virology">
        <title>Gene organization of chicken anemia virus.</title>
        <authorList>
            <person name="Kato A."/>
            <person name="Fujino M."/>
            <person name="Nakamura T."/>
            <person name="Ishihama A."/>
            <person name="Otaki Y."/>
        </authorList>
    </citation>
    <scope>NUCLEOTIDE SEQUENCE [GENOMIC DNA]</scope>
</reference>
<evidence type="ECO:0000250" key="1"/>
<evidence type="ECO:0000256" key="2">
    <source>
        <dbReference type="SAM" id="MobiDB-lite"/>
    </source>
</evidence>
<evidence type="ECO:0000305" key="3"/>